<evidence type="ECO:0000255" key="1">
    <source>
        <dbReference type="HAMAP-Rule" id="MF_00279"/>
    </source>
</evidence>
<sequence>MIELGVNIDHVATLRQQRHTVYPDPVQAALRAEDAGADLITLHLREDRRHILDADVHAIRPLLRTRMNLECAITPEMLDIACAVRPSDVCLVPEKRTELTTEGGLEVAGALDAVRDAVARLHDAGIRVSLFIDPDIAQIQAAAQAGATVIELHTGAYAEAPDGQAGPELDRLRAALAEGLRHGMRVNAGHGLHYGNVAPIAALDGIAELNIGHAIVAQAVFDGWEKAVRDMKALMVQARQQALRGR</sequence>
<reference key="1">
    <citation type="journal article" date="2008" name="BMC Genomics">
        <title>The missing link: Bordetella petrii is endowed with both the metabolic versatility of environmental bacteria and virulence traits of pathogenic Bordetellae.</title>
        <authorList>
            <person name="Gross R."/>
            <person name="Guzman C.A."/>
            <person name="Sebaihia M."/>
            <person name="Martin dos Santos V.A.P."/>
            <person name="Pieper D.H."/>
            <person name="Koebnik R."/>
            <person name="Lechner M."/>
            <person name="Bartels D."/>
            <person name="Buhrmester J."/>
            <person name="Choudhuri J.V."/>
            <person name="Ebensen T."/>
            <person name="Gaigalat L."/>
            <person name="Herrmann S."/>
            <person name="Khachane A.N."/>
            <person name="Larisch C."/>
            <person name="Link S."/>
            <person name="Linke B."/>
            <person name="Meyer F."/>
            <person name="Mormann S."/>
            <person name="Nakunst D."/>
            <person name="Rueckert C."/>
            <person name="Schneiker-Bekel S."/>
            <person name="Schulze K."/>
            <person name="Voerholter F.-J."/>
            <person name="Yevsa T."/>
            <person name="Engle J.T."/>
            <person name="Goldman W.E."/>
            <person name="Puehler A."/>
            <person name="Goebel U.B."/>
            <person name="Goesmann A."/>
            <person name="Bloecker H."/>
            <person name="Kaiser O."/>
            <person name="Martinez-Arias R."/>
        </authorList>
    </citation>
    <scope>NUCLEOTIDE SEQUENCE [LARGE SCALE GENOMIC DNA]</scope>
    <source>
        <strain>ATCC BAA-461 / DSM 12804 / CCUG 43448</strain>
    </source>
</reference>
<keyword id="KW-0963">Cytoplasm</keyword>
<keyword id="KW-0664">Pyridoxine biosynthesis</keyword>
<keyword id="KW-0808">Transferase</keyword>
<accession>A9IUY4</accession>
<protein>
    <recommendedName>
        <fullName evidence="1">Pyridoxine 5'-phosphate synthase</fullName>
        <shortName evidence="1">PNP synthase</shortName>
        <ecNumber evidence="1">2.6.99.2</ecNumber>
    </recommendedName>
</protein>
<comment type="function">
    <text evidence="1">Catalyzes the complicated ring closure reaction between the two acyclic compounds 1-deoxy-D-xylulose-5-phosphate (DXP) and 3-amino-2-oxopropyl phosphate (1-amino-acetone-3-phosphate or AAP) to form pyridoxine 5'-phosphate (PNP) and inorganic phosphate.</text>
</comment>
<comment type="catalytic activity">
    <reaction evidence="1">
        <text>3-amino-2-oxopropyl phosphate + 1-deoxy-D-xylulose 5-phosphate = pyridoxine 5'-phosphate + phosphate + 2 H2O + H(+)</text>
        <dbReference type="Rhea" id="RHEA:15265"/>
        <dbReference type="ChEBI" id="CHEBI:15377"/>
        <dbReference type="ChEBI" id="CHEBI:15378"/>
        <dbReference type="ChEBI" id="CHEBI:43474"/>
        <dbReference type="ChEBI" id="CHEBI:57279"/>
        <dbReference type="ChEBI" id="CHEBI:57792"/>
        <dbReference type="ChEBI" id="CHEBI:58589"/>
        <dbReference type="EC" id="2.6.99.2"/>
    </reaction>
</comment>
<comment type="pathway">
    <text evidence="1">Cofactor biosynthesis; pyridoxine 5'-phosphate biosynthesis; pyridoxine 5'-phosphate from D-erythrose 4-phosphate: step 5/5.</text>
</comment>
<comment type="subunit">
    <text evidence="1">Homooctamer; tetramer of dimers.</text>
</comment>
<comment type="subcellular location">
    <subcellularLocation>
        <location evidence="1">Cytoplasm</location>
    </subcellularLocation>
</comment>
<comment type="similarity">
    <text evidence="1">Belongs to the PNP synthase family.</text>
</comment>
<organism>
    <name type="scientific">Bordetella petrii (strain ATCC BAA-461 / DSM 12804 / CCUG 43448)</name>
    <dbReference type="NCBI Taxonomy" id="340100"/>
    <lineage>
        <taxon>Bacteria</taxon>
        <taxon>Pseudomonadati</taxon>
        <taxon>Pseudomonadota</taxon>
        <taxon>Betaproteobacteria</taxon>
        <taxon>Burkholderiales</taxon>
        <taxon>Alcaligenaceae</taxon>
        <taxon>Bordetella</taxon>
    </lineage>
</organism>
<name>PDXJ_BORPD</name>
<proteinExistence type="inferred from homology"/>
<dbReference type="EC" id="2.6.99.2" evidence="1"/>
<dbReference type="EMBL" id="AM902716">
    <property type="protein sequence ID" value="CAP43601.1"/>
    <property type="molecule type" value="Genomic_DNA"/>
</dbReference>
<dbReference type="SMR" id="A9IUY4"/>
<dbReference type="STRING" id="94624.Bpet3259"/>
<dbReference type="KEGG" id="bpt:Bpet3259"/>
<dbReference type="eggNOG" id="COG0854">
    <property type="taxonomic scope" value="Bacteria"/>
</dbReference>
<dbReference type="UniPathway" id="UPA00244">
    <property type="reaction ID" value="UER00313"/>
</dbReference>
<dbReference type="Proteomes" id="UP000001225">
    <property type="component" value="Chromosome"/>
</dbReference>
<dbReference type="GO" id="GO:0005829">
    <property type="term" value="C:cytosol"/>
    <property type="evidence" value="ECO:0007669"/>
    <property type="project" value="TreeGrafter"/>
</dbReference>
<dbReference type="GO" id="GO:0033856">
    <property type="term" value="F:pyridoxine 5'-phosphate synthase activity"/>
    <property type="evidence" value="ECO:0007669"/>
    <property type="project" value="UniProtKB-EC"/>
</dbReference>
<dbReference type="GO" id="GO:0008615">
    <property type="term" value="P:pyridoxine biosynthetic process"/>
    <property type="evidence" value="ECO:0007669"/>
    <property type="project" value="UniProtKB-UniRule"/>
</dbReference>
<dbReference type="CDD" id="cd00003">
    <property type="entry name" value="PNPsynthase"/>
    <property type="match status" value="1"/>
</dbReference>
<dbReference type="Gene3D" id="3.20.20.70">
    <property type="entry name" value="Aldolase class I"/>
    <property type="match status" value="1"/>
</dbReference>
<dbReference type="HAMAP" id="MF_00279">
    <property type="entry name" value="PdxJ"/>
    <property type="match status" value="1"/>
</dbReference>
<dbReference type="InterPro" id="IPR013785">
    <property type="entry name" value="Aldolase_TIM"/>
</dbReference>
<dbReference type="InterPro" id="IPR004569">
    <property type="entry name" value="PyrdxlP_synth_PdxJ"/>
</dbReference>
<dbReference type="InterPro" id="IPR036130">
    <property type="entry name" value="Pyridoxine-5'_phos_synth"/>
</dbReference>
<dbReference type="NCBIfam" id="TIGR00559">
    <property type="entry name" value="pdxJ"/>
    <property type="match status" value="1"/>
</dbReference>
<dbReference type="NCBIfam" id="NF003623">
    <property type="entry name" value="PRK05265.1-1"/>
    <property type="match status" value="1"/>
</dbReference>
<dbReference type="NCBIfam" id="NF003625">
    <property type="entry name" value="PRK05265.1-3"/>
    <property type="match status" value="1"/>
</dbReference>
<dbReference type="NCBIfam" id="NF003627">
    <property type="entry name" value="PRK05265.1-5"/>
    <property type="match status" value="1"/>
</dbReference>
<dbReference type="PANTHER" id="PTHR30456">
    <property type="entry name" value="PYRIDOXINE 5'-PHOSPHATE SYNTHASE"/>
    <property type="match status" value="1"/>
</dbReference>
<dbReference type="PANTHER" id="PTHR30456:SF0">
    <property type="entry name" value="PYRIDOXINE 5'-PHOSPHATE SYNTHASE"/>
    <property type="match status" value="1"/>
</dbReference>
<dbReference type="Pfam" id="PF03740">
    <property type="entry name" value="PdxJ"/>
    <property type="match status" value="1"/>
</dbReference>
<dbReference type="SUPFAM" id="SSF63892">
    <property type="entry name" value="Pyridoxine 5'-phosphate synthase"/>
    <property type="match status" value="1"/>
</dbReference>
<feature type="chain" id="PRO_1000114800" description="Pyridoxine 5'-phosphate synthase">
    <location>
        <begin position="1"/>
        <end position="246"/>
    </location>
</feature>
<feature type="active site" description="Proton acceptor" evidence="1">
    <location>
        <position position="43"/>
    </location>
</feature>
<feature type="active site" description="Proton acceptor" evidence="1">
    <location>
        <position position="70"/>
    </location>
</feature>
<feature type="active site" description="Proton donor" evidence="1">
    <location>
        <position position="190"/>
    </location>
</feature>
<feature type="binding site" evidence="1">
    <location>
        <position position="7"/>
    </location>
    <ligand>
        <name>3-amino-2-oxopropyl phosphate</name>
        <dbReference type="ChEBI" id="CHEBI:57279"/>
    </ligand>
</feature>
<feature type="binding site" evidence="1">
    <location>
        <begin position="9"/>
        <end position="10"/>
    </location>
    <ligand>
        <name>1-deoxy-D-xylulose 5-phosphate</name>
        <dbReference type="ChEBI" id="CHEBI:57792"/>
    </ligand>
</feature>
<feature type="binding site" evidence="1">
    <location>
        <position position="18"/>
    </location>
    <ligand>
        <name>3-amino-2-oxopropyl phosphate</name>
        <dbReference type="ChEBI" id="CHEBI:57279"/>
    </ligand>
</feature>
<feature type="binding site" evidence="1">
    <location>
        <position position="45"/>
    </location>
    <ligand>
        <name>1-deoxy-D-xylulose 5-phosphate</name>
        <dbReference type="ChEBI" id="CHEBI:57792"/>
    </ligand>
</feature>
<feature type="binding site" evidence="1">
    <location>
        <position position="50"/>
    </location>
    <ligand>
        <name>1-deoxy-D-xylulose 5-phosphate</name>
        <dbReference type="ChEBI" id="CHEBI:57792"/>
    </ligand>
</feature>
<feature type="binding site" evidence="1">
    <location>
        <position position="100"/>
    </location>
    <ligand>
        <name>1-deoxy-D-xylulose 5-phosphate</name>
        <dbReference type="ChEBI" id="CHEBI:57792"/>
    </ligand>
</feature>
<feature type="binding site" evidence="1">
    <location>
        <position position="191"/>
    </location>
    <ligand>
        <name>3-amino-2-oxopropyl phosphate</name>
        <dbReference type="ChEBI" id="CHEBI:57279"/>
    </ligand>
</feature>
<feature type="binding site" evidence="1">
    <location>
        <begin position="212"/>
        <end position="213"/>
    </location>
    <ligand>
        <name>3-amino-2-oxopropyl phosphate</name>
        <dbReference type="ChEBI" id="CHEBI:57279"/>
    </ligand>
</feature>
<feature type="site" description="Transition state stabilizer" evidence="1">
    <location>
        <position position="151"/>
    </location>
</feature>
<gene>
    <name evidence="1" type="primary">pdxJ</name>
    <name type="ordered locus">Bpet3259</name>
</gene>